<reference key="1">
    <citation type="submission" date="1996-11" db="EMBL/GenBank/DDBJ databases">
        <title>The 10.7 kb 'nonessential' region of bacteriophage T4 between the genes tk and nrdC: twenty new t4 genes, generally conserved among T-even phages.</title>
        <authorList>
            <person name="Mzhavia N."/>
            <person name="Marusich E."/>
            <person name="Djavakhishvili T."/>
            <person name="Neitzel J."/>
            <person name="Peterson S."/>
            <person name="Awaya M."/>
            <person name="Eidermiller J."/>
            <person name="Canada D."/>
            <person name="Tracy J."/>
            <person name="Gailbreath K."/>
            <person name="Paddison P."/>
            <person name="Anderson B."/>
            <person name="Stidham T."/>
            <person name="Blattner F."/>
            <person name="Kutter E.M."/>
        </authorList>
    </citation>
    <scope>NUCLEOTIDE SEQUENCE [GENOMIC DNA]</scope>
</reference>
<reference key="2">
    <citation type="journal article" date="2003" name="Microbiol. Mol. Biol. Rev.">
        <title>Bacteriophage T4 genome.</title>
        <authorList>
            <person name="Miller E.S."/>
            <person name="Kutter E."/>
            <person name="Mosig G."/>
            <person name="Arisaka F."/>
            <person name="Kunisawa T."/>
            <person name="Ruger W."/>
        </authorList>
    </citation>
    <scope>NUCLEOTIDE SEQUENCE [LARGE SCALE GENOMIC DNA]</scope>
</reference>
<organism>
    <name type="scientific">Enterobacteria phage T4</name>
    <name type="common">Bacteriophage T4</name>
    <dbReference type="NCBI Taxonomy" id="10665"/>
    <lineage>
        <taxon>Viruses</taxon>
        <taxon>Duplodnaviria</taxon>
        <taxon>Heunggongvirae</taxon>
        <taxon>Uroviricota</taxon>
        <taxon>Caudoviricetes</taxon>
        <taxon>Straboviridae</taxon>
        <taxon>Tevenvirinae</taxon>
        <taxon>Tequatrovirus</taxon>
    </lineage>
</organism>
<keyword id="KW-1185">Reference proteome</keyword>
<sequence length="64" mass="7605">MLTREQFEKIIKLAHDIEIDSYQLAVEHCEGYSYDGIEAAKRDLDKSKAKLVQYLEMIRWNNEN</sequence>
<organismHost>
    <name type="scientific">Escherichia coli</name>
    <dbReference type="NCBI Taxonomy" id="562"/>
</organismHost>
<feature type="chain" id="PRO_0000165128" description="Uncharacterized 7.6 kDa protein in mobD-ri intergenic region">
    <location>
        <begin position="1"/>
        <end position="64"/>
    </location>
</feature>
<gene>
    <name type="primary">y05K</name>
    <name type="synonym">mobD.3</name>
    <name type="synonym">tk.-7</name>
</gene>
<proteinExistence type="predicted"/>
<name>Y05K_BPT4</name>
<accession>P39238</accession>
<protein>
    <recommendedName>
        <fullName>Uncharacterized 7.6 kDa protein in mobD-ri intergenic region</fullName>
    </recommendedName>
</protein>
<dbReference type="EMBL" id="U76612">
    <property type="protein sequence ID" value="AAB26966.1"/>
    <property type="molecule type" value="Genomic_DNA"/>
</dbReference>
<dbReference type="EMBL" id="AF158101">
    <property type="protein sequence ID" value="AAD42595.1"/>
    <property type="molecule type" value="Genomic_DNA"/>
</dbReference>
<dbReference type="RefSeq" id="NP_049713.1">
    <property type="nucleotide sequence ID" value="NC_000866.4"/>
</dbReference>
<dbReference type="SMR" id="P39238"/>
<dbReference type="GeneID" id="1258661"/>
<dbReference type="KEGG" id="vg:1258661"/>
<dbReference type="OrthoDB" id="25861at10239"/>
<dbReference type="Proteomes" id="UP000009087">
    <property type="component" value="Segment"/>
</dbReference>